<keyword id="KW-0010">Activator</keyword>
<keyword id="KW-0217">Developmental protein</keyword>
<keyword id="KW-0238">DNA-binding</keyword>
<keyword id="KW-0539">Nucleus</keyword>
<keyword id="KW-1185">Reference proteome</keyword>
<keyword id="KW-0677">Repeat</keyword>
<keyword id="KW-0804">Transcription</keyword>
<keyword id="KW-0805">Transcription regulation</keyword>
<comment type="function">
    <text evidence="1 3">Transcription activator (By similarity). Positively regulates axillary meristems (AMs) formation and development, especially during inflorescence.</text>
</comment>
<comment type="interaction">
    <interactant intactId="EBI-2292310">
        <id>Q9SJL7</id>
    </interactant>
    <interactant intactId="EBI-301649">
        <id>P43254</id>
        <label>COP1</label>
    </interactant>
    <organismsDiffer>false</organismsDiffer>
    <experiments>3</experiments>
</comment>
<comment type="subcellular location">
    <subcellularLocation>
        <location evidence="2">Nucleus</location>
    </subcellularLocation>
</comment>
<comment type="tissue specificity">
    <text evidence="3">Ubiquitous, with higher levels in roots, flowers, and shoot tips. Found in all cells of the shoot tips.</text>
</comment>
<name>RAX2_ARATH</name>
<feature type="chain" id="PRO_0000312432" description="Transcription factor RAX2">
    <location>
        <begin position="1"/>
        <end position="298"/>
    </location>
</feature>
<feature type="domain" description="HTH myb-type 1" evidence="2">
    <location>
        <begin position="9"/>
        <end position="62"/>
    </location>
</feature>
<feature type="domain" description="HTH myb-type 2" evidence="2">
    <location>
        <begin position="63"/>
        <end position="117"/>
    </location>
</feature>
<feature type="DNA-binding region" description="H-T-H motif" evidence="2">
    <location>
        <begin position="38"/>
        <end position="62"/>
    </location>
</feature>
<feature type="DNA-binding region" description="H-T-H motif" evidence="2">
    <location>
        <begin position="90"/>
        <end position="113"/>
    </location>
</feature>
<feature type="sequence variant" description="In strain: cv. Oy-0." evidence="4">
    <original>G</original>
    <variation>D</variation>
    <location>
        <position position="175"/>
    </location>
</feature>
<feature type="sequence variant" description="In strain: cv. An-1, cv. Ct-1, cv. Cvi-1 and cv. Wassilewskija." evidence="4">
    <original>N</original>
    <variation>K</variation>
    <location>
        <position position="188"/>
    </location>
</feature>
<feature type="sequence variant" description="In strain: cv. An-1, cv. Ct-1, cv. Cvi-1 and cv. Wassilewskija." evidence="4">
    <original>H</original>
    <variation>D</variation>
    <location>
        <position position="244"/>
    </location>
</feature>
<feature type="sequence variant" description="In strain: cv. An-1, cv. Ct-1, cv. Cvi-1 and cv. Wassilewskija." evidence="4">
    <original>T</original>
    <variation>S</variation>
    <location>
        <position position="256"/>
    </location>
</feature>
<feature type="sequence conflict" description="In Ref. 1; AAS10047." evidence="5" ref="1">
    <original>S</original>
    <variation>P</variation>
    <location>
        <position position="141"/>
    </location>
</feature>
<feature type="sequence conflict" description="In Ref. 4; AAC83602." evidence="5" ref="4">
    <location>
        <position position="248"/>
    </location>
</feature>
<protein>
    <recommendedName>
        <fullName>Transcription factor RAX2</fullName>
    </recommendedName>
    <alternativeName>
        <fullName>Myb-related protein 38</fullName>
        <shortName>AtMYB38</shortName>
    </alternativeName>
    <alternativeName>
        <fullName>Protein REGULATOR OF AXILLARY MERISTEMS 2</fullName>
    </alternativeName>
</protein>
<accession>Q9SJL7</accession>
<accession>A5YZ54</accession>
<accession>A5YZ55</accession>
<accession>A5YZ66</accession>
<accession>Q6R0A1</accession>
<accession>Q9ZTE4</accession>
<organism>
    <name type="scientific">Arabidopsis thaliana</name>
    <name type="common">Mouse-ear cress</name>
    <dbReference type="NCBI Taxonomy" id="3702"/>
    <lineage>
        <taxon>Eukaryota</taxon>
        <taxon>Viridiplantae</taxon>
        <taxon>Streptophyta</taxon>
        <taxon>Embryophyta</taxon>
        <taxon>Tracheophyta</taxon>
        <taxon>Spermatophyta</taxon>
        <taxon>Magnoliopsida</taxon>
        <taxon>eudicotyledons</taxon>
        <taxon>Gunneridae</taxon>
        <taxon>Pentapetalae</taxon>
        <taxon>rosids</taxon>
        <taxon>malvids</taxon>
        <taxon>Brassicales</taxon>
        <taxon>Brassicaceae</taxon>
        <taxon>Camelineae</taxon>
        <taxon>Arabidopsis</taxon>
    </lineage>
</organism>
<reference key="1">
    <citation type="submission" date="2004-01" db="EMBL/GenBank/DDBJ databases">
        <title>The MYB transcription factor family in Arabidopsis: a genome-wide cloning and expression pattern analysis.</title>
        <authorList>
            <person name="Qu L.-J."/>
            <person name="Gu H."/>
        </authorList>
    </citation>
    <scope>NUCLEOTIDE SEQUENCE [MRNA]</scope>
</reference>
<reference key="2">
    <citation type="journal article" date="1999" name="Nature">
        <title>Sequence and analysis of chromosome 2 of the plant Arabidopsis thaliana.</title>
        <authorList>
            <person name="Lin X."/>
            <person name="Kaul S."/>
            <person name="Rounsley S.D."/>
            <person name="Shea T.P."/>
            <person name="Benito M.-I."/>
            <person name="Town C.D."/>
            <person name="Fujii C.Y."/>
            <person name="Mason T.M."/>
            <person name="Bowman C.L."/>
            <person name="Barnstead M.E."/>
            <person name="Feldblyum T.V."/>
            <person name="Buell C.R."/>
            <person name="Ketchum K.A."/>
            <person name="Lee J.J."/>
            <person name="Ronning C.M."/>
            <person name="Koo H.L."/>
            <person name="Moffat K.S."/>
            <person name="Cronin L.A."/>
            <person name="Shen M."/>
            <person name="Pai G."/>
            <person name="Van Aken S."/>
            <person name="Umayam L."/>
            <person name="Tallon L.J."/>
            <person name="Gill J.E."/>
            <person name="Adams M.D."/>
            <person name="Carrera A.J."/>
            <person name="Creasy T.H."/>
            <person name="Goodman H.M."/>
            <person name="Somerville C.R."/>
            <person name="Copenhaver G.P."/>
            <person name="Preuss D."/>
            <person name="Nierman W.C."/>
            <person name="White O."/>
            <person name="Eisen J.A."/>
            <person name="Salzberg S.L."/>
            <person name="Fraser C.M."/>
            <person name="Venter J.C."/>
        </authorList>
    </citation>
    <scope>NUCLEOTIDE SEQUENCE [LARGE SCALE GENOMIC DNA]</scope>
    <source>
        <strain>cv. Columbia</strain>
    </source>
</reference>
<reference key="3">
    <citation type="journal article" date="2017" name="Plant J.">
        <title>Araport11: a complete reannotation of the Arabidopsis thaliana reference genome.</title>
        <authorList>
            <person name="Cheng C.Y."/>
            <person name="Krishnakumar V."/>
            <person name="Chan A.P."/>
            <person name="Thibaud-Nissen F."/>
            <person name="Schobel S."/>
            <person name="Town C.D."/>
        </authorList>
    </citation>
    <scope>GENOME REANNOTATION</scope>
    <source>
        <strain>cv. Columbia</strain>
    </source>
</reference>
<reference key="4">
    <citation type="journal article" date="1998" name="Plant J.">
        <title>Towards functional characterisation of the members of the R2R3-MYB gene family from Arabidopsis thaliana.</title>
        <authorList>
            <person name="Kranz H.D."/>
            <person name="Denekamp M."/>
            <person name="Greco R."/>
            <person name="Jin H.-L."/>
            <person name="Leyva A."/>
            <person name="Meissner R.C."/>
            <person name="Petroni K."/>
            <person name="Urzainqui A."/>
            <person name="Bevan M."/>
            <person name="Martin C."/>
            <person name="Smeekens S."/>
            <person name="Tonelli C."/>
            <person name="Paz-Ares J."/>
            <person name="Weisshaar B."/>
        </authorList>
    </citation>
    <scope>NUCLEOTIDE SEQUENCE [MRNA] OF 55-298</scope>
    <source>
        <strain>cv. Columbia</strain>
    </source>
</reference>
<reference key="5">
    <citation type="journal article" date="2007" name="Genetics">
        <title>The genetic architecture of shoot branching in Arabidopsis thaliana: a comparative assessment of candidate gene associations vs. quantitative trait locus mapping.</title>
        <authorList>
            <person name="Ehrenreich I.M."/>
            <person name="Stafford P.A."/>
            <person name="Purugganan M.D."/>
        </authorList>
    </citation>
    <scope>NUCLEOTIDE SEQUENCE [GENOMIC DNA] OF 124-268</scope>
    <scope>VARIANTS ASP-175; LYS-188; ASP-244 AND SER-256</scope>
    <source>
        <strain>cv. Ag-0</strain>
        <strain>cv. An-1</strain>
        <strain>cv. Br-0</strain>
        <strain>cv. C24</strain>
        <strain>cv. Ct-1</strain>
        <strain>cv. Cvi-1</strain>
        <strain>cv. Edi-0</strain>
        <strain>cv. Ga-0</strain>
        <strain>cv. Kas-1</strain>
        <strain>cv. Kin-0</strain>
        <strain>cv. Landsberg erecta</strain>
        <strain>cv. Ll-0</strain>
        <strain>cv. Lz-0</strain>
        <strain>cv. Ms-0</strain>
        <strain>cv. Mt-0</strain>
        <strain>cv. Nd-1</strain>
        <strain>cv. Nok-3</strain>
        <strain>cv. Oy-0</strain>
        <strain>cv. Se-0</strain>
        <strain>cv. Sorbo</strain>
        <strain>cv. Tsu-1</strain>
        <strain>cv. Van-0</strain>
        <strain>cv. Wa-1</strain>
        <strain>cv. Wassilewskija</strain>
    </source>
</reference>
<reference key="6">
    <citation type="journal article" date="2001" name="Curr. Opin. Plant Biol.">
        <title>The R2R3-MYB gene family in Arabidopsis thaliana.</title>
        <authorList>
            <person name="Stracke R."/>
            <person name="Werber M."/>
            <person name="Weisshaar B."/>
        </authorList>
    </citation>
    <scope>GENE FAMILY</scope>
    <scope>NOMENCLATURE</scope>
    <source>
        <strain>cv. Columbia</strain>
    </source>
</reference>
<reference key="7">
    <citation type="journal article" date="2006" name="Plant Cell">
        <title>Blind homologous R2R3 Myb genes control the pattern of lateral meristem initiation in Arabidopsis.</title>
        <authorList>
            <person name="Mueller D."/>
            <person name="Schmitz G."/>
            <person name="Theres K."/>
        </authorList>
    </citation>
    <scope>FUNCTION</scope>
    <scope>TISSUE SPECIFICITY</scope>
</reference>
<reference key="8">
    <citation type="journal article" date="2006" name="Plant Mol. Biol.">
        <title>The MYB transcription factor superfamily of Arabidopsis: expression analysis and phylogenetic comparison with the rice MYB family.</title>
        <authorList>
            <person name="Chen Y."/>
            <person name="Yang X."/>
            <person name="He K."/>
            <person name="Liu M."/>
            <person name="Li J."/>
            <person name="Gao Z."/>
            <person name="Lin Z."/>
            <person name="Zhang Y."/>
            <person name="Wang X."/>
            <person name="Qiu X."/>
            <person name="Shen Y."/>
            <person name="Zhang L."/>
            <person name="Deng X."/>
            <person name="Luo J."/>
            <person name="Deng X.-W."/>
            <person name="Chen Z."/>
            <person name="Gu H."/>
            <person name="Qu L.-J."/>
        </authorList>
    </citation>
    <scope>GENE FAMILY</scope>
</reference>
<proteinExistence type="evidence at protein level"/>
<evidence type="ECO:0000250" key="1"/>
<evidence type="ECO:0000255" key="2">
    <source>
        <dbReference type="PROSITE-ProRule" id="PRU00625"/>
    </source>
</evidence>
<evidence type="ECO:0000269" key="3">
    <source>
    </source>
</evidence>
<evidence type="ECO:0000269" key="4">
    <source>
    </source>
</evidence>
<evidence type="ECO:0000305" key="5"/>
<dbReference type="EMBL" id="AY519577">
    <property type="protein sequence ID" value="AAS10047.1"/>
    <property type="molecule type" value="mRNA"/>
</dbReference>
<dbReference type="EMBL" id="AC006922">
    <property type="protein sequence ID" value="AAD31574.1"/>
    <property type="molecule type" value="Genomic_DNA"/>
</dbReference>
<dbReference type="EMBL" id="CP002685">
    <property type="protein sequence ID" value="AEC09315.1"/>
    <property type="molecule type" value="Genomic_DNA"/>
</dbReference>
<dbReference type="EMBL" id="AF062880">
    <property type="protein sequence ID" value="AAC83602.1"/>
    <property type="molecule type" value="mRNA"/>
</dbReference>
<dbReference type="EMBL" id="EF598636">
    <property type="protein sequence ID" value="ABR09096.1"/>
    <property type="molecule type" value="Genomic_DNA"/>
</dbReference>
<dbReference type="EMBL" id="EF598637">
    <property type="protein sequence ID" value="ABR09097.1"/>
    <property type="molecule type" value="Genomic_DNA"/>
</dbReference>
<dbReference type="EMBL" id="EF598638">
    <property type="protein sequence ID" value="ABR09098.1"/>
    <property type="molecule type" value="Genomic_DNA"/>
</dbReference>
<dbReference type="EMBL" id="EF598639">
    <property type="protein sequence ID" value="ABR09099.1"/>
    <property type="molecule type" value="Genomic_DNA"/>
</dbReference>
<dbReference type="EMBL" id="EF598640">
    <property type="protein sequence ID" value="ABR09100.1"/>
    <property type="molecule type" value="Genomic_DNA"/>
</dbReference>
<dbReference type="EMBL" id="EF598641">
    <property type="protein sequence ID" value="ABR09101.1"/>
    <property type="molecule type" value="Genomic_DNA"/>
</dbReference>
<dbReference type="EMBL" id="EF598642">
    <property type="protein sequence ID" value="ABR09102.1"/>
    <property type="molecule type" value="Genomic_DNA"/>
</dbReference>
<dbReference type="EMBL" id="EF598643">
    <property type="protein sequence ID" value="ABR09103.1"/>
    <property type="molecule type" value="Genomic_DNA"/>
</dbReference>
<dbReference type="EMBL" id="EF598644">
    <property type="protein sequence ID" value="ABR09104.1"/>
    <property type="molecule type" value="Genomic_DNA"/>
</dbReference>
<dbReference type="EMBL" id="EF598645">
    <property type="protein sequence ID" value="ABR09105.1"/>
    <property type="molecule type" value="Genomic_DNA"/>
</dbReference>
<dbReference type="EMBL" id="EF598646">
    <property type="protein sequence ID" value="ABR09106.1"/>
    <property type="molecule type" value="Genomic_DNA"/>
</dbReference>
<dbReference type="EMBL" id="EF598647">
    <property type="protein sequence ID" value="ABR09107.1"/>
    <property type="molecule type" value="Genomic_DNA"/>
</dbReference>
<dbReference type="EMBL" id="EF598648">
    <property type="protein sequence ID" value="ABR09108.1"/>
    <property type="molecule type" value="Genomic_DNA"/>
</dbReference>
<dbReference type="EMBL" id="EF598649">
    <property type="protein sequence ID" value="ABR09109.1"/>
    <property type="molecule type" value="Genomic_DNA"/>
</dbReference>
<dbReference type="EMBL" id="EF598650">
    <property type="protein sequence ID" value="ABR09110.1"/>
    <property type="molecule type" value="Genomic_DNA"/>
</dbReference>
<dbReference type="EMBL" id="EF598651">
    <property type="protein sequence ID" value="ABR09111.1"/>
    <property type="molecule type" value="Genomic_DNA"/>
</dbReference>
<dbReference type="EMBL" id="EF598652">
    <property type="protein sequence ID" value="ABR09112.1"/>
    <property type="molecule type" value="Genomic_DNA"/>
</dbReference>
<dbReference type="EMBL" id="EF598653">
    <property type="protein sequence ID" value="ABR09113.1"/>
    <property type="molecule type" value="Genomic_DNA"/>
</dbReference>
<dbReference type="EMBL" id="EF598654">
    <property type="protein sequence ID" value="ABR09114.1"/>
    <property type="molecule type" value="Genomic_DNA"/>
</dbReference>
<dbReference type="EMBL" id="EF598655">
    <property type="protein sequence ID" value="ABR09115.1"/>
    <property type="molecule type" value="Genomic_DNA"/>
</dbReference>
<dbReference type="EMBL" id="EF598656">
    <property type="protein sequence ID" value="ABR09116.1"/>
    <property type="molecule type" value="Genomic_DNA"/>
</dbReference>
<dbReference type="EMBL" id="EF598657">
    <property type="protein sequence ID" value="ABR09117.1"/>
    <property type="molecule type" value="Genomic_DNA"/>
</dbReference>
<dbReference type="EMBL" id="EF598658">
    <property type="protein sequence ID" value="ABR09118.1"/>
    <property type="molecule type" value="Genomic_DNA"/>
</dbReference>
<dbReference type="EMBL" id="EF598659">
    <property type="protein sequence ID" value="ABR09119.1"/>
    <property type="molecule type" value="Genomic_DNA"/>
</dbReference>
<dbReference type="PIR" id="H84785">
    <property type="entry name" value="H84785"/>
</dbReference>
<dbReference type="PIR" id="T51652">
    <property type="entry name" value="T51652"/>
</dbReference>
<dbReference type="RefSeq" id="NP_181226.1">
    <property type="nucleotide sequence ID" value="NM_129245.3"/>
</dbReference>
<dbReference type="SMR" id="Q9SJL7"/>
<dbReference type="BioGRID" id="3606">
    <property type="interactions" value="2"/>
</dbReference>
<dbReference type="FunCoup" id="Q9SJL7">
    <property type="interactions" value="23"/>
</dbReference>
<dbReference type="IntAct" id="Q9SJL7">
    <property type="interactions" value="2"/>
</dbReference>
<dbReference type="STRING" id="3702.Q9SJL7"/>
<dbReference type="PaxDb" id="3702-AT2G36890.1"/>
<dbReference type="ProteomicsDB" id="236487"/>
<dbReference type="EnsemblPlants" id="AT2G36890.1">
    <property type="protein sequence ID" value="AT2G36890.1"/>
    <property type="gene ID" value="AT2G36890"/>
</dbReference>
<dbReference type="GeneID" id="818262"/>
<dbReference type="Gramene" id="AT2G36890.1">
    <property type="protein sequence ID" value="AT2G36890.1"/>
    <property type="gene ID" value="AT2G36890"/>
</dbReference>
<dbReference type="KEGG" id="ath:AT2G36890"/>
<dbReference type="Araport" id="AT2G36890"/>
<dbReference type="TAIR" id="AT2G36890">
    <property type="gene designation" value="RAX2"/>
</dbReference>
<dbReference type="eggNOG" id="KOG0048">
    <property type="taxonomic scope" value="Eukaryota"/>
</dbReference>
<dbReference type="HOGENOM" id="CLU_028567_6_2_1"/>
<dbReference type="InParanoid" id="Q9SJL7"/>
<dbReference type="OMA" id="QGMMMTM"/>
<dbReference type="OrthoDB" id="2143914at2759"/>
<dbReference type="PhylomeDB" id="Q9SJL7"/>
<dbReference type="PRO" id="PR:Q9SJL7"/>
<dbReference type="Proteomes" id="UP000006548">
    <property type="component" value="Chromosome 2"/>
</dbReference>
<dbReference type="ExpressionAtlas" id="Q9SJL7">
    <property type="expression patterns" value="baseline and differential"/>
</dbReference>
<dbReference type="GO" id="GO:0005634">
    <property type="term" value="C:nucleus"/>
    <property type="evidence" value="ECO:0007669"/>
    <property type="project" value="UniProtKB-SubCell"/>
</dbReference>
<dbReference type="GO" id="GO:0003677">
    <property type="term" value="F:DNA binding"/>
    <property type="evidence" value="ECO:0007669"/>
    <property type="project" value="UniProtKB-KW"/>
</dbReference>
<dbReference type="GO" id="GO:0003700">
    <property type="term" value="F:DNA-binding transcription factor activity"/>
    <property type="evidence" value="ECO:0000250"/>
    <property type="project" value="TAIR"/>
</dbReference>
<dbReference type="GO" id="GO:0009785">
    <property type="term" value="P:blue light signaling pathway"/>
    <property type="evidence" value="ECO:0000315"/>
    <property type="project" value="TAIR"/>
</dbReference>
<dbReference type="CDD" id="cd00167">
    <property type="entry name" value="SANT"/>
    <property type="match status" value="2"/>
</dbReference>
<dbReference type="FunFam" id="1.10.10.60:FF:000388">
    <property type="entry name" value="Transcription factor RAX2"/>
    <property type="match status" value="1"/>
</dbReference>
<dbReference type="FunFam" id="1.10.10.60:FF:000015">
    <property type="entry name" value="Transcription factor RAX3"/>
    <property type="match status" value="1"/>
</dbReference>
<dbReference type="Gene3D" id="1.10.10.60">
    <property type="entry name" value="Homeodomain-like"/>
    <property type="match status" value="2"/>
</dbReference>
<dbReference type="InterPro" id="IPR009057">
    <property type="entry name" value="Homeodomain-like_sf"/>
</dbReference>
<dbReference type="InterPro" id="IPR017930">
    <property type="entry name" value="Myb_dom"/>
</dbReference>
<dbReference type="InterPro" id="IPR001005">
    <property type="entry name" value="SANT/Myb"/>
</dbReference>
<dbReference type="PANTHER" id="PTHR48000">
    <property type="entry name" value="OS09G0431300 PROTEIN"/>
    <property type="match status" value="1"/>
</dbReference>
<dbReference type="PANTHER" id="PTHR48000:SF28">
    <property type="entry name" value="TRANSCRIPTION FACTOR RAX2"/>
    <property type="match status" value="1"/>
</dbReference>
<dbReference type="Pfam" id="PF00249">
    <property type="entry name" value="Myb_DNA-binding"/>
    <property type="match status" value="2"/>
</dbReference>
<dbReference type="SMART" id="SM00717">
    <property type="entry name" value="SANT"/>
    <property type="match status" value="2"/>
</dbReference>
<dbReference type="SUPFAM" id="SSF46689">
    <property type="entry name" value="Homeodomain-like"/>
    <property type="match status" value="1"/>
</dbReference>
<dbReference type="PROSITE" id="PS51294">
    <property type="entry name" value="HTH_MYB"/>
    <property type="match status" value="2"/>
</dbReference>
<sequence length="298" mass="34057">MGRAPCCDKANVKRGPWSPEEDAKLKDYIEKQGTGGNWIALPHKAGLRRCGKSCRLRWLNYLRPNIRHGDFTEEEDNIIYSLFASIGSRWSVIAAHLQGRTDNDIKNYWNTKLKKKLIATMAPPPHHHLAIATSSSSASPSSSSHYNMINSLLPYNPSTNQLLTPHQGIMMTMMGQQQQLFYQEDMGNLVNSPNRNNLIMSHQEDNQEQSTNKGIMLLSDVRSGSSTTSTVTRVKMEHRDHDDHHHHHEEDERSMTSVVMEDYGMEEIKQLISSSCTSSNNSLWFDENKTEDKFMLYY</sequence>
<gene>
    <name type="primary">RAX2</name>
    <name type="synonym">MYB38</name>
    <name type="ordered locus">At2g36890</name>
    <name type="ORF">T1J8.7</name>
</gene>